<feature type="chain" id="PRO_0000455689" description="Trans-enoyl reductase tenC">
    <location>
        <begin position="1"/>
        <end position="388"/>
    </location>
</feature>
<feature type="binding site" evidence="1">
    <location>
        <begin position="51"/>
        <end position="54"/>
    </location>
    <ligand>
        <name>NADP(+)</name>
        <dbReference type="ChEBI" id="CHEBI:58349"/>
    </ligand>
</feature>
<feature type="binding site" evidence="2">
    <location>
        <begin position="142"/>
        <end position="149"/>
    </location>
    <ligand>
        <name>substrate</name>
    </ligand>
</feature>
<feature type="binding site" evidence="1">
    <location>
        <begin position="219"/>
        <end position="222"/>
    </location>
    <ligand>
        <name>NADP(+)</name>
        <dbReference type="ChEBI" id="CHEBI:58349"/>
    </ligand>
</feature>
<feature type="binding site" evidence="1">
    <location>
        <position position="237"/>
    </location>
    <ligand>
        <name>NADP(+)</name>
        <dbReference type="ChEBI" id="CHEBI:58349"/>
    </ligand>
</feature>
<feature type="binding site" evidence="1">
    <location>
        <begin position="284"/>
        <end position="285"/>
    </location>
    <ligand>
        <name>NADP(+)</name>
        <dbReference type="ChEBI" id="CHEBI:58349"/>
    </ligand>
</feature>
<feature type="binding site" evidence="2">
    <location>
        <begin position="304"/>
        <end position="308"/>
    </location>
    <ligand>
        <name>substrate</name>
    </ligand>
</feature>
<feature type="binding site" evidence="1">
    <location>
        <begin position="373"/>
        <end position="374"/>
    </location>
    <ligand>
        <name>NADP(+)</name>
        <dbReference type="ChEBI" id="CHEBI:58349"/>
    </ligand>
</feature>
<protein>
    <recommendedName>
        <fullName evidence="7">Trans-enoyl reductase tenC</fullName>
        <ecNumber evidence="4">1.-.-.-</ecNumber>
    </recommendedName>
    <alternativeName>
        <fullName evidence="7">Tenellin biosynthesis protein C</fullName>
    </alternativeName>
</protein>
<reference key="1">
    <citation type="journal article" date="2012" name="Sci. Rep.">
        <title>Genomic perspectives on the evolution of fungal entomopathogenicity in Beauveria bassiana.</title>
        <authorList>
            <person name="Xiao G."/>
            <person name="Ying S.-H."/>
            <person name="Zheng P."/>
            <person name="Wang Z.-L."/>
            <person name="Zhang S."/>
            <person name="Xie X.-Q."/>
            <person name="Shang Y."/>
            <person name="St Leger R.J."/>
            <person name="Zhao G.-P."/>
            <person name="Wang C."/>
            <person name="Feng M.-G."/>
        </authorList>
    </citation>
    <scope>NUCLEOTIDE SEQUENCE [LARGE SCALE GENOMIC DNA]</scope>
    <source>
        <strain>ARSEF 2860</strain>
    </source>
</reference>
<reference key="2">
    <citation type="journal article" date="2007" name="ChemBioChem">
        <title>Biosynthesis of the 2-pyridone tenellin in the insect pathogenic fungus Beauveria bassiana.</title>
        <authorList>
            <person name="Eley K.L."/>
            <person name="Halo L.M."/>
            <person name="Song Z."/>
            <person name="Powles H."/>
            <person name="Cox R.J."/>
            <person name="Bailey A.M."/>
            <person name="Lazarus C.M."/>
            <person name="Simpson T.J."/>
        </authorList>
    </citation>
    <scope>FUNCTION</scope>
    <scope>PATHWAY</scope>
</reference>
<reference key="3">
    <citation type="journal article" date="2008" name="ChemBioChem">
        <title>Authentic heterologous expression of the tenellin iterative polyketide synthase nonribosomal peptide synthetase requires coexpression with an enoyl reductase.</title>
        <authorList>
            <person name="Halo L.M."/>
            <person name="Marshall J.W."/>
            <person name="Yakasai A.A."/>
            <person name="Song Z."/>
            <person name="Butts C.P."/>
            <person name="Crump M.P."/>
            <person name="Heneghan M."/>
            <person name="Bailey A.M."/>
            <person name="Simpson T.J."/>
            <person name="Lazarus C.M."/>
            <person name="Cox R.J."/>
        </authorList>
    </citation>
    <scope>FUNCTION</scope>
    <scope>CATALYTIC ACTIVITY</scope>
    <scope>PATHWAY</scope>
</reference>
<reference key="4">
    <citation type="journal article" date="2010" name="ChemBioChem">
        <title>First heterologous reconstruction of a complete functional fungal biosynthetic multigene cluster.</title>
        <authorList>
            <person name="Heneghan M.N."/>
            <person name="Yakasai A.A."/>
            <person name="Halo L.M."/>
            <person name="Song Z."/>
            <person name="Bailey A.M."/>
            <person name="Simpson T.J."/>
            <person name="Cox R.J."/>
            <person name="Lazarus C.M."/>
        </authorList>
    </citation>
    <scope>FUNCTION</scope>
    <scope>PATHWAY</scope>
</reference>
<reference key="5">
    <citation type="journal article" date="2021" name="MBio">
        <title>Inductive production of the iron-chelating 2-pyridones benefits the producing fungus to compete for diverse niches.</title>
        <authorList>
            <person name="Chen B."/>
            <person name="Sun Y."/>
            <person name="Li S."/>
            <person name="Yin Y."/>
            <person name="Wang C."/>
        </authorList>
    </citation>
    <scope>FUNCTION</scope>
    <scope>INDUCTION</scope>
    <scope>PATHWAY</scope>
</reference>
<keyword id="KW-0521">NADP</keyword>
<keyword id="KW-0547">Nucleotide-binding</keyword>
<keyword id="KW-0560">Oxidoreductase</keyword>
<keyword id="KW-1185">Reference proteome</keyword>
<name>TENC_BEAB2</name>
<accession>J5JCC9</accession>
<sequence>MAAISARPLTQKALKVASPDTLHLVADAPVPTLDQDDSVLIRVVCVAINPVDGKSAELSPTPGATSGTDFAGIVVALHGDAKSRTETADTIKTGDRVMGFVFGNNPHVLGNGAFAEYVTLPRRFLWRVPDHMSLEAAASLPVGIASVGMALHYLHISMSSLLQAVSRSIAAASASQHHDGAFDSDANVFILVYGGGTSTGAIAIQILKAAGFHPITCCSSESASRAKRLGAAATFDYQSATCGRDIRDYTNDSLTLAIDCLSESASMAICYEAIGSAGGRYVSLDPFPVRGCVRRSIVPDWICSFTQFGQSIPWAPPYNLDERPDDHRLAEEWYHLAQKLLDAELIEAPTLEIRSGGLLHVPEGVAAVKLGQIKRRKLVYHISEEALP</sequence>
<proteinExistence type="evidence at protein level"/>
<gene>
    <name evidence="7" type="primary">tenC</name>
    <name type="ORF">BBA_07337</name>
</gene>
<organism>
    <name type="scientific">Beauveria bassiana (strain ARSEF 2860)</name>
    <name type="common">White muscardine disease fungus</name>
    <name type="synonym">Tritirachium shiotae</name>
    <dbReference type="NCBI Taxonomy" id="655819"/>
    <lineage>
        <taxon>Eukaryota</taxon>
        <taxon>Fungi</taxon>
        <taxon>Dikarya</taxon>
        <taxon>Ascomycota</taxon>
        <taxon>Pezizomycotina</taxon>
        <taxon>Sordariomycetes</taxon>
        <taxon>Hypocreomycetidae</taxon>
        <taxon>Hypocreales</taxon>
        <taxon>Cordycipitaceae</taxon>
        <taxon>Beauveria</taxon>
    </lineage>
</organism>
<dbReference type="EC" id="1.-.-.-" evidence="4"/>
<dbReference type="EMBL" id="JH725173">
    <property type="protein sequence ID" value="EJP63693.1"/>
    <property type="molecule type" value="Genomic_DNA"/>
</dbReference>
<dbReference type="RefSeq" id="XP_008600656.1">
    <property type="nucleotide sequence ID" value="XM_008602434.1"/>
</dbReference>
<dbReference type="SMR" id="J5JCC9"/>
<dbReference type="STRING" id="655819.J5JCC9"/>
<dbReference type="GeneID" id="19890349"/>
<dbReference type="HOGENOM" id="CLU_026673_16_1_1"/>
<dbReference type="InParanoid" id="J5JCC9"/>
<dbReference type="OrthoDB" id="3114at474943"/>
<dbReference type="Proteomes" id="UP000002762">
    <property type="component" value="Unassembled WGS sequence"/>
</dbReference>
<dbReference type="GO" id="GO:0000166">
    <property type="term" value="F:nucleotide binding"/>
    <property type="evidence" value="ECO:0007669"/>
    <property type="project" value="UniProtKB-KW"/>
</dbReference>
<dbReference type="GO" id="GO:0016651">
    <property type="term" value="F:oxidoreductase activity, acting on NAD(P)H"/>
    <property type="evidence" value="ECO:0007669"/>
    <property type="project" value="InterPro"/>
</dbReference>
<dbReference type="CDD" id="cd08249">
    <property type="entry name" value="enoyl_reductase_like"/>
    <property type="match status" value="1"/>
</dbReference>
<dbReference type="Gene3D" id="3.90.180.10">
    <property type="entry name" value="Medium-chain alcohol dehydrogenases, catalytic domain"/>
    <property type="match status" value="1"/>
</dbReference>
<dbReference type="Gene3D" id="3.40.50.720">
    <property type="entry name" value="NAD(P)-binding Rossmann-like Domain"/>
    <property type="match status" value="1"/>
</dbReference>
<dbReference type="InterPro" id="IPR013149">
    <property type="entry name" value="ADH-like_C"/>
</dbReference>
<dbReference type="InterPro" id="IPR013154">
    <property type="entry name" value="ADH-like_N"/>
</dbReference>
<dbReference type="InterPro" id="IPR011032">
    <property type="entry name" value="GroES-like_sf"/>
</dbReference>
<dbReference type="InterPro" id="IPR036291">
    <property type="entry name" value="NAD(P)-bd_dom_sf"/>
</dbReference>
<dbReference type="InterPro" id="IPR020843">
    <property type="entry name" value="PKS_ER"/>
</dbReference>
<dbReference type="InterPro" id="IPR047122">
    <property type="entry name" value="Trans-enoyl_RdTase-like"/>
</dbReference>
<dbReference type="PANTHER" id="PTHR45348">
    <property type="entry name" value="HYPOTHETICAL OXIDOREDUCTASE (EUROFUNG)"/>
    <property type="match status" value="1"/>
</dbReference>
<dbReference type="PANTHER" id="PTHR45348:SF6">
    <property type="entry name" value="TRANS-ENOYL REDUCTASE APDC"/>
    <property type="match status" value="1"/>
</dbReference>
<dbReference type="Pfam" id="PF08240">
    <property type="entry name" value="ADH_N"/>
    <property type="match status" value="1"/>
</dbReference>
<dbReference type="Pfam" id="PF00107">
    <property type="entry name" value="ADH_zinc_N"/>
    <property type="match status" value="1"/>
</dbReference>
<dbReference type="SMART" id="SM00829">
    <property type="entry name" value="PKS_ER"/>
    <property type="match status" value="1"/>
</dbReference>
<dbReference type="SUPFAM" id="SSF50129">
    <property type="entry name" value="GroES-like"/>
    <property type="match status" value="1"/>
</dbReference>
<dbReference type="SUPFAM" id="SSF51735">
    <property type="entry name" value="NAD(P)-binding Rossmann-fold domains"/>
    <property type="match status" value="1"/>
</dbReference>
<comment type="function">
    <text evidence="3 4 5 6">Trans-enoyl reductase; part of the gene cluster that mediates the biosynthesis of tenellin-type 2-pyridones, iron-chelating compounds involved in iron stress tolerance, competition with the natural competitor fungus Metarhizium robertsii and insect hosts infection (PubMed:17216664, PubMed:18266306, PubMed:20575135, PubMed:34903054). TenC collaborates with the hybrid PKS-NRPS synthetase tenS to catalyze the assembly of the polyketide-amino acid backbone, since tenS lacks a designated enoylreductase (ER) domain (PubMed:18266306, PubMed:34903054). Upon formation of the polyketide backbone on the thiotemplate of tenS, the triketide is transferred to the NRPS module and linked to tyrosine to produce the pyrrolidine-2-dione intermediates, including pretellinin A, 11-hydropretellenin A, 12-hydropretellenin A, 13-hydropretellenin A, 14-hydropretellenin A, 12-oxopretellenin A and prototellinin D (PubMed:18266306, PubMed:34903054). The pathway begins with the assembly of the polyketide-amino acid backbone by the hybrid PKS-NRPS tenS with the help of the enoyl reductase tenC. These enzymes catalyze the synthesis of the pyrrolidine-2-dione intermediates pretellinin A, 11-hydropretellenin A, 12-hydropretellenin A, 13-hydropretellenin A, 14-hydropretellenin A, 12-oxopretellenin A and prototellinin D. The cytochrome P450 monooxygenase tenA then catalyzes an oxidative ring expansion of pretenellin A and 14-hydropretellenin A to form the 2-pyridone core, leading to pretenellin B and pyridovericin, respectively. The cytochrome P450 monooxygenase tenB is then required for the selective N-hydroxylation of the 2-pyridone nitrogen of yield tellinin and 15-hydroxytellenin (15-HT), respectively. The UDP-glucosyltransferase GT1 and the methyltransferase MT1, located outside the tenS gene cluster, contribute to the stepwise glycosylation and methylation of 15-HT to obtain the glycoside pyridovericin-N-O-(4-O-methyl-beta-D-glucopyranoside) (PMGP). Additional related compounds such as 1-O-methyl-15-HT, (8Z)-1-O-methyl-15-HT, and O-methyltenellin A are also produced but the enzymes involved in their biosynthesis have still to be determined (PubMed:34903054).</text>
</comment>
<comment type="pathway">
    <text evidence="3 4 5 6">Secondary metabolite biosynthesis.</text>
</comment>
<comment type="subunit">
    <text evidence="1">Monomer.</text>
</comment>
<comment type="induction">
    <text evidence="6">Expression is positively regulated by the cluster-specific transcription factor tenR and is induced during cocultures with the natural competitor fungus Metarhizium robertsii.</text>
</comment>
<comment type="similarity">
    <text evidence="8">Belongs to the zinc-containing alcohol dehydrogenase family.</text>
</comment>
<evidence type="ECO:0000250" key="1">
    <source>
        <dbReference type="UniProtKB" id="Q9Y7D0"/>
    </source>
</evidence>
<evidence type="ECO:0000255" key="2"/>
<evidence type="ECO:0000269" key="3">
    <source>
    </source>
</evidence>
<evidence type="ECO:0000269" key="4">
    <source>
    </source>
</evidence>
<evidence type="ECO:0000269" key="5">
    <source>
    </source>
</evidence>
<evidence type="ECO:0000269" key="6">
    <source>
    </source>
</evidence>
<evidence type="ECO:0000303" key="7">
    <source>
    </source>
</evidence>
<evidence type="ECO:0000305" key="8"/>